<gene>
    <name evidence="1" type="primary">murI</name>
    <name type="ordered locus">LBL_0815</name>
</gene>
<keyword id="KW-0133">Cell shape</keyword>
<keyword id="KW-0961">Cell wall biogenesis/degradation</keyword>
<keyword id="KW-0413">Isomerase</keyword>
<keyword id="KW-0573">Peptidoglycan synthesis</keyword>
<dbReference type="EC" id="5.1.1.3" evidence="1"/>
<dbReference type="EMBL" id="CP000348">
    <property type="protein sequence ID" value="ABJ78371.1"/>
    <property type="molecule type" value="Genomic_DNA"/>
</dbReference>
<dbReference type="RefSeq" id="WP_011669676.1">
    <property type="nucleotide sequence ID" value="NC_008508.1"/>
</dbReference>
<dbReference type="SMR" id="Q053X4"/>
<dbReference type="KEGG" id="lbl:LBL_0815"/>
<dbReference type="HOGENOM" id="CLU_052344_1_0_12"/>
<dbReference type="UniPathway" id="UPA00219"/>
<dbReference type="GO" id="GO:0008881">
    <property type="term" value="F:glutamate racemase activity"/>
    <property type="evidence" value="ECO:0007669"/>
    <property type="project" value="UniProtKB-UniRule"/>
</dbReference>
<dbReference type="GO" id="GO:0071555">
    <property type="term" value="P:cell wall organization"/>
    <property type="evidence" value="ECO:0007669"/>
    <property type="project" value="UniProtKB-KW"/>
</dbReference>
<dbReference type="GO" id="GO:0009252">
    <property type="term" value="P:peptidoglycan biosynthetic process"/>
    <property type="evidence" value="ECO:0007669"/>
    <property type="project" value="UniProtKB-UniRule"/>
</dbReference>
<dbReference type="GO" id="GO:0008360">
    <property type="term" value="P:regulation of cell shape"/>
    <property type="evidence" value="ECO:0007669"/>
    <property type="project" value="UniProtKB-KW"/>
</dbReference>
<dbReference type="Gene3D" id="3.40.50.1860">
    <property type="match status" value="2"/>
</dbReference>
<dbReference type="HAMAP" id="MF_00258">
    <property type="entry name" value="Glu_racemase"/>
    <property type="match status" value="1"/>
</dbReference>
<dbReference type="InterPro" id="IPR015942">
    <property type="entry name" value="Asp/Glu/hydantoin_racemase"/>
</dbReference>
<dbReference type="InterPro" id="IPR001920">
    <property type="entry name" value="Asp/Glu_race"/>
</dbReference>
<dbReference type="InterPro" id="IPR004391">
    <property type="entry name" value="Glu_race"/>
</dbReference>
<dbReference type="NCBIfam" id="TIGR00067">
    <property type="entry name" value="glut_race"/>
    <property type="match status" value="1"/>
</dbReference>
<dbReference type="PANTHER" id="PTHR21198">
    <property type="entry name" value="GLUTAMATE RACEMASE"/>
    <property type="match status" value="1"/>
</dbReference>
<dbReference type="PANTHER" id="PTHR21198:SF3">
    <property type="entry name" value="GLUTAMATE RACEMASE"/>
    <property type="match status" value="1"/>
</dbReference>
<dbReference type="Pfam" id="PF01177">
    <property type="entry name" value="Asp_Glu_race"/>
    <property type="match status" value="1"/>
</dbReference>
<dbReference type="SUPFAM" id="SSF53681">
    <property type="entry name" value="Aspartate/glutamate racemase"/>
    <property type="match status" value="2"/>
</dbReference>
<sequence length="258" mass="28796">MKGPLKIGLMDSGMGGLSVLKGILKYDAELEVVYYGDLKNSPYGEKETSEILELVRDVCKRLQEENVSAILLACNTATSAAAQTLRKEFSIPIFGMEPAIKPAILQNPGKKIALLATPVTQREKKLQRLKAELGAEELILPVSCPGLAGLVDKGEFDEAEKYLRPILKKLREENVENLVLGCTHYIFLKHIILKNFPNVRIYDGNSGTIKHLLNSLQVRQRVSNRSSVSGSVYKLILNSDEELHFRLATELLQFENKF</sequence>
<feature type="chain" id="PRO_1000047581" description="Glutamate racemase">
    <location>
        <begin position="1"/>
        <end position="258"/>
    </location>
</feature>
<feature type="active site" description="Proton donor/acceptor" evidence="1">
    <location>
        <position position="74"/>
    </location>
</feature>
<feature type="active site" description="Proton donor/acceptor" evidence="1">
    <location>
        <position position="182"/>
    </location>
</feature>
<feature type="binding site" evidence="1">
    <location>
        <begin position="11"/>
        <end position="12"/>
    </location>
    <ligand>
        <name>substrate</name>
    </ligand>
</feature>
<feature type="binding site" evidence="1">
    <location>
        <begin position="43"/>
        <end position="44"/>
    </location>
    <ligand>
        <name>substrate</name>
    </ligand>
</feature>
<feature type="binding site" evidence="1">
    <location>
        <begin position="75"/>
        <end position="76"/>
    </location>
    <ligand>
        <name>substrate</name>
    </ligand>
</feature>
<feature type="binding site" evidence="1">
    <location>
        <begin position="183"/>
        <end position="184"/>
    </location>
    <ligand>
        <name>substrate</name>
    </ligand>
</feature>
<comment type="function">
    <text evidence="1">Provides the (R)-glutamate required for cell wall biosynthesis.</text>
</comment>
<comment type="catalytic activity">
    <reaction evidence="1">
        <text>L-glutamate = D-glutamate</text>
        <dbReference type="Rhea" id="RHEA:12813"/>
        <dbReference type="ChEBI" id="CHEBI:29985"/>
        <dbReference type="ChEBI" id="CHEBI:29986"/>
        <dbReference type="EC" id="5.1.1.3"/>
    </reaction>
</comment>
<comment type="pathway">
    <text evidence="1">Cell wall biogenesis; peptidoglycan biosynthesis.</text>
</comment>
<comment type="similarity">
    <text evidence="1">Belongs to the aspartate/glutamate racemases family.</text>
</comment>
<name>MURI_LEPBL</name>
<accession>Q053X4</accession>
<proteinExistence type="inferred from homology"/>
<evidence type="ECO:0000255" key="1">
    <source>
        <dbReference type="HAMAP-Rule" id="MF_00258"/>
    </source>
</evidence>
<protein>
    <recommendedName>
        <fullName evidence="1">Glutamate racemase</fullName>
        <ecNumber evidence="1">5.1.1.3</ecNumber>
    </recommendedName>
</protein>
<reference key="1">
    <citation type="journal article" date="2006" name="Proc. Natl. Acad. Sci. U.S.A.">
        <title>Genome reduction in Leptospira borgpetersenii reflects limited transmission potential.</title>
        <authorList>
            <person name="Bulach D.M."/>
            <person name="Zuerner R.L."/>
            <person name="Wilson P."/>
            <person name="Seemann T."/>
            <person name="McGrath A."/>
            <person name="Cullen P.A."/>
            <person name="Davis J."/>
            <person name="Johnson M."/>
            <person name="Kuczek E."/>
            <person name="Alt D.P."/>
            <person name="Peterson-Burch B."/>
            <person name="Coppel R.L."/>
            <person name="Rood J.I."/>
            <person name="Davies J.K."/>
            <person name="Adler B."/>
        </authorList>
    </citation>
    <scope>NUCLEOTIDE SEQUENCE [LARGE SCALE GENOMIC DNA]</scope>
    <source>
        <strain>L550</strain>
    </source>
</reference>
<organism>
    <name type="scientific">Leptospira borgpetersenii serovar Hardjo-bovis (strain L550)</name>
    <dbReference type="NCBI Taxonomy" id="355276"/>
    <lineage>
        <taxon>Bacteria</taxon>
        <taxon>Pseudomonadati</taxon>
        <taxon>Spirochaetota</taxon>
        <taxon>Spirochaetia</taxon>
        <taxon>Leptospirales</taxon>
        <taxon>Leptospiraceae</taxon>
        <taxon>Leptospira</taxon>
    </lineage>
</organism>